<comment type="similarity">
    <text evidence="1">Belongs to the eukaryotic ribosomal protein eL14 family.</text>
</comment>
<dbReference type="EMBL" id="BA000002">
    <property type="protein sequence ID" value="BAA79960.2"/>
    <property type="molecule type" value="Genomic_DNA"/>
</dbReference>
<dbReference type="PIR" id="H72694">
    <property type="entry name" value="H72694"/>
</dbReference>
<dbReference type="RefSeq" id="WP_010866109.1">
    <property type="nucleotide sequence ID" value="NC_000854.2"/>
</dbReference>
<dbReference type="SMR" id="Q9YDD7"/>
<dbReference type="STRING" id="272557.APE_0976.1"/>
<dbReference type="EnsemblBacteria" id="BAA79960">
    <property type="protein sequence ID" value="BAA79960"/>
    <property type="gene ID" value="APE_0976.1"/>
</dbReference>
<dbReference type="GeneID" id="1445047"/>
<dbReference type="KEGG" id="ape:APE_0976.1"/>
<dbReference type="PATRIC" id="fig|272557.25.peg.705"/>
<dbReference type="eggNOG" id="arCOG04167">
    <property type="taxonomic scope" value="Archaea"/>
</dbReference>
<dbReference type="Proteomes" id="UP000002518">
    <property type="component" value="Chromosome"/>
</dbReference>
<dbReference type="GO" id="GO:0022625">
    <property type="term" value="C:cytosolic large ribosomal subunit"/>
    <property type="evidence" value="ECO:0007669"/>
    <property type="project" value="TreeGrafter"/>
</dbReference>
<dbReference type="GO" id="GO:0003723">
    <property type="term" value="F:RNA binding"/>
    <property type="evidence" value="ECO:0007669"/>
    <property type="project" value="InterPro"/>
</dbReference>
<dbReference type="GO" id="GO:0003735">
    <property type="term" value="F:structural constituent of ribosome"/>
    <property type="evidence" value="ECO:0007669"/>
    <property type="project" value="InterPro"/>
</dbReference>
<dbReference type="GO" id="GO:0042273">
    <property type="term" value="P:ribosomal large subunit biogenesis"/>
    <property type="evidence" value="ECO:0007669"/>
    <property type="project" value="TreeGrafter"/>
</dbReference>
<dbReference type="GO" id="GO:0006412">
    <property type="term" value="P:translation"/>
    <property type="evidence" value="ECO:0007669"/>
    <property type="project" value="UniProtKB-UniRule"/>
</dbReference>
<dbReference type="CDD" id="cd23702">
    <property type="entry name" value="eL14"/>
    <property type="match status" value="1"/>
</dbReference>
<dbReference type="FunFam" id="2.30.30.30:FF:000045">
    <property type="entry name" value="50S ribosomal protein L14e"/>
    <property type="match status" value="1"/>
</dbReference>
<dbReference type="Gene3D" id="2.30.30.30">
    <property type="match status" value="1"/>
</dbReference>
<dbReference type="HAMAP" id="MF_00721">
    <property type="entry name" value="Ribosomal_eL14"/>
    <property type="match status" value="1"/>
</dbReference>
<dbReference type="InterPro" id="IPR005824">
    <property type="entry name" value="KOW"/>
</dbReference>
<dbReference type="InterPro" id="IPR014722">
    <property type="entry name" value="Rib_uL2_dom2"/>
</dbReference>
<dbReference type="InterPro" id="IPR039660">
    <property type="entry name" value="Ribosomal_eL14"/>
</dbReference>
<dbReference type="InterPro" id="IPR023651">
    <property type="entry name" value="Ribosomal_eL14_arc"/>
</dbReference>
<dbReference type="InterPro" id="IPR008991">
    <property type="entry name" value="Translation_prot_SH3-like_sf"/>
</dbReference>
<dbReference type="NCBIfam" id="NF003320">
    <property type="entry name" value="PRK04333.1"/>
    <property type="match status" value="1"/>
</dbReference>
<dbReference type="PANTHER" id="PTHR11127">
    <property type="entry name" value="60S RIBOSOMAL PROTEIN L14"/>
    <property type="match status" value="1"/>
</dbReference>
<dbReference type="PANTHER" id="PTHR11127:SF2">
    <property type="entry name" value="LARGE RIBOSOMAL SUBUNIT PROTEIN EL14"/>
    <property type="match status" value="1"/>
</dbReference>
<dbReference type="Pfam" id="PF00467">
    <property type="entry name" value="KOW"/>
    <property type="match status" value="1"/>
</dbReference>
<dbReference type="SUPFAM" id="SSF50104">
    <property type="entry name" value="Translation proteins SH3-like domain"/>
    <property type="match status" value="1"/>
</dbReference>
<reference key="1">
    <citation type="journal article" date="1999" name="DNA Res.">
        <title>Complete genome sequence of an aerobic hyper-thermophilic crenarchaeon, Aeropyrum pernix K1.</title>
        <authorList>
            <person name="Kawarabayasi Y."/>
            <person name="Hino Y."/>
            <person name="Horikawa H."/>
            <person name="Yamazaki S."/>
            <person name="Haikawa Y."/>
            <person name="Jin-no K."/>
            <person name="Takahashi M."/>
            <person name="Sekine M."/>
            <person name="Baba S."/>
            <person name="Ankai A."/>
            <person name="Kosugi H."/>
            <person name="Hosoyama A."/>
            <person name="Fukui S."/>
            <person name="Nagai Y."/>
            <person name="Nishijima K."/>
            <person name="Nakazawa H."/>
            <person name="Takamiya M."/>
            <person name="Masuda S."/>
            <person name="Funahashi T."/>
            <person name="Tanaka T."/>
            <person name="Kudoh Y."/>
            <person name="Yamazaki J."/>
            <person name="Kushida N."/>
            <person name="Oguchi A."/>
            <person name="Aoki K."/>
            <person name="Kubota K."/>
            <person name="Nakamura Y."/>
            <person name="Nomura N."/>
            <person name="Sako Y."/>
            <person name="Kikuchi H."/>
        </authorList>
    </citation>
    <scope>NUCLEOTIDE SEQUENCE [LARGE SCALE GENOMIC DNA]</scope>
    <source>
        <strain>ATCC 700893 / DSM 11879 / JCM 9820 / NBRC 100138 / K1</strain>
    </source>
</reference>
<evidence type="ECO:0000255" key="1">
    <source>
        <dbReference type="HAMAP-Rule" id="MF_00721"/>
    </source>
</evidence>
<evidence type="ECO:0000305" key="2"/>
<name>RL14E_AERPE</name>
<organism>
    <name type="scientific">Aeropyrum pernix (strain ATCC 700893 / DSM 11879 / JCM 9820 / NBRC 100138 / K1)</name>
    <dbReference type="NCBI Taxonomy" id="272557"/>
    <lineage>
        <taxon>Archaea</taxon>
        <taxon>Thermoproteota</taxon>
        <taxon>Thermoprotei</taxon>
        <taxon>Desulfurococcales</taxon>
        <taxon>Desulfurococcaceae</taxon>
        <taxon>Aeropyrum</taxon>
    </lineage>
</organism>
<feature type="chain" id="PRO_0000132045" description="Large ribosomal subunit protein eL14">
    <location>
        <begin position="1"/>
        <end position="100"/>
    </location>
</feature>
<sequence>MAKVVEVGRICVKTRGREAGRKCVIVDIIDENFVLVTGPKSLTGVRRRRVNIDHIEILDKKVDIQKGASDEEVLKALEEAGLADFMREPVRIARITPFTL</sequence>
<gene>
    <name evidence="1" type="primary">rpl14e</name>
    <name type="ordered locus">APE_0976.1</name>
</gene>
<accession>Q9YDD7</accession>
<proteinExistence type="inferred from homology"/>
<protein>
    <recommendedName>
        <fullName evidence="1">Large ribosomal subunit protein eL14</fullName>
    </recommendedName>
    <alternativeName>
        <fullName evidence="2">50S ribosomal protein L14e</fullName>
    </alternativeName>
</protein>
<keyword id="KW-1185">Reference proteome</keyword>
<keyword id="KW-0687">Ribonucleoprotein</keyword>
<keyword id="KW-0689">Ribosomal protein</keyword>